<reference key="1">
    <citation type="journal article" date="1997" name="Science">
        <title>The complete genome sequence of Escherichia coli K-12.</title>
        <authorList>
            <person name="Blattner F.R."/>
            <person name="Plunkett G. III"/>
            <person name="Bloch C.A."/>
            <person name="Perna N.T."/>
            <person name="Burland V."/>
            <person name="Riley M."/>
            <person name="Collado-Vides J."/>
            <person name="Glasner J.D."/>
            <person name="Rode C.K."/>
            <person name="Mayhew G.F."/>
            <person name="Gregor J."/>
            <person name="Davis N.W."/>
            <person name="Kirkpatrick H.A."/>
            <person name="Goeden M.A."/>
            <person name="Rose D.J."/>
            <person name="Mau B."/>
            <person name="Shao Y."/>
        </authorList>
    </citation>
    <scope>NUCLEOTIDE SEQUENCE [LARGE SCALE GENOMIC DNA]</scope>
    <source>
        <strain>K12 / MG1655 / ATCC 47076</strain>
    </source>
</reference>
<reference key="2">
    <citation type="journal article" date="2006" name="Mol. Syst. Biol.">
        <title>Highly accurate genome sequences of Escherichia coli K-12 strains MG1655 and W3110.</title>
        <authorList>
            <person name="Hayashi K."/>
            <person name="Morooka N."/>
            <person name="Yamamoto Y."/>
            <person name="Fujita K."/>
            <person name="Isono K."/>
            <person name="Choi S."/>
            <person name="Ohtsubo E."/>
            <person name="Baba T."/>
            <person name="Wanner B.L."/>
            <person name="Mori H."/>
            <person name="Horiuchi T."/>
        </authorList>
    </citation>
    <scope>NUCLEOTIDE SEQUENCE [LARGE SCALE GENOMIC DNA]</scope>
    <source>
        <strain>K12 / W3110 / ATCC 27325 / DSM 5911</strain>
    </source>
</reference>
<reference key="3">
    <citation type="journal article" date="2003" name="Res. Microbiol.">
        <title>Changes in Escherichia coli transcriptome during acclimatization at low temperature.</title>
        <authorList>
            <person name="Polissi A."/>
            <person name="De Laurentis W."/>
            <person name="Zangrossi S."/>
            <person name="Briani F."/>
            <person name="Longhi V."/>
            <person name="Pesole G."/>
            <person name="Deho G."/>
        </authorList>
    </citation>
    <scope>INDUCTION</scope>
    <source>
        <strain>K12 / MG1655 / ATCC 47076</strain>
    </source>
</reference>
<reference key="4">
    <citation type="journal article" date="2011" name="J. Bacteriol.">
        <title>Genome-wide identification of transcription start sites yields a novel thermosensing RNA and new cyclic AMP receptor protein-regulated genes in Escherichia coli.</title>
        <authorList>
            <person name="Raghavan R."/>
            <person name="Sage A."/>
            <person name="Ochman H."/>
        </authorList>
    </citation>
    <scope>IDENTIFICATION OF PROBABLE TRANSLATIONAL START</scope>
    <source>
        <strain>K12 / MG1655 / ATCC 47076</strain>
    </source>
</reference>
<keyword id="KW-1185">Reference proteome</keyword>
<accession>P76073</accession>
<accession>Q2MBD7</accession>
<comment type="induction">
    <text evidence="1">By cold shock.</text>
</comment>
<comment type="similarity">
    <text evidence="2">To E.coli YdfK.</text>
</comment>
<comment type="sequence caution" evidence="2">
    <conflict type="erroneous initiation">
        <sequence resource="EMBL-CDS" id="BAE76419"/>
    </conflict>
    <text>Extended N-terminus.</text>
</comment>
<dbReference type="EMBL" id="U00096">
    <property type="protein sequence ID" value="AAC74457.2"/>
    <property type="molecule type" value="Genomic_DNA"/>
</dbReference>
<dbReference type="EMBL" id="AP009048">
    <property type="protein sequence ID" value="BAE76419.1"/>
    <property type="status" value="ALT_INIT"/>
    <property type="molecule type" value="Genomic_DNA"/>
</dbReference>
<dbReference type="PIR" id="B64888">
    <property type="entry name" value="B64888"/>
</dbReference>
<dbReference type="RefSeq" id="NP_415893.2">
    <property type="nucleotide sequence ID" value="NC_000913.3"/>
</dbReference>
<dbReference type="SMR" id="P76073"/>
<dbReference type="BioGRID" id="4259566">
    <property type="interactions" value="40"/>
</dbReference>
<dbReference type="FunCoup" id="P76073">
    <property type="interactions" value="312"/>
</dbReference>
<dbReference type="IntAct" id="P76073">
    <property type="interactions" value="26"/>
</dbReference>
<dbReference type="STRING" id="511145.b1375"/>
<dbReference type="PaxDb" id="511145-b1375"/>
<dbReference type="EnsemblBacteria" id="AAC74457">
    <property type="protein sequence ID" value="AAC74457"/>
    <property type="gene ID" value="b1375"/>
</dbReference>
<dbReference type="GeneID" id="946078"/>
<dbReference type="KEGG" id="ecj:JW1369"/>
<dbReference type="KEGG" id="eco:b1375"/>
<dbReference type="KEGG" id="ecoc:C3026_08035"/>
<dbReference type="PATRIC" id="fig|1411691.4.peg.721"/>
<dbReference type="EchoBASE" id="EB3155"/>
<dbReference type="eggNOG" id="ENOG503303D">
    <property type="taxonomic scope" value="Bacteria"/>
</dbReference>
<dbReference type="HOGENOM" id="CLU_2367798_0_0_6"/>
<dbReference type="InParanoid" id="P76073"/>
<dbReference type="OrthoDB" id="6556103at2"/>
<dbReference type="BioCyc" id="EcoCyc:G6698-MONOMER"/>
<dbReference type="PRO" id="PR:P76073"/>
<dbReference type="Proteomes" id="UP000000625">
    <property type="component" value="Chromosome"/>
</dbReference>
<dbReference type="GO" id="GO:0009409">
    <property type="term" value="P:response to cold"/>
    <property type="evidence" value="ECO:0000270"/>
    <property type="project" value="EcoCyc"/>
</dbReference>
<gene>
    <name type="primary">ynaE</name>
    <name type="ordered locus">b1375</name>
    <name type="ordered locus">JW1369</name>
</gene>
<name>YNAE_ECOLI</name>
<proteinExistence type="evidence at transcript level"/>
<protein>
    <recommendedName>
        <fullName>Uncharacterized protein YnaE</fullName>
    </recommendedName>
</protein>
<feature type="chain" id="PRO_0000168915" description="Uncharacterized protein YnaE">
    <location>
        <begin position="1"/>
        <end position="77"/>
    </location>
</feature>
<sequence length="77" mass="8751">MKSKDTLKWFPAQLPEVRIILGDAVVEVAKQGRPINTRTLLDYIEGNIKKTSWLDNKELLQTAISVLKDNQNLNGKM</sequence>
<evidence type="ECO:0000269" key="1">
    <source>
    </source>
</evidence>
<evidence type="ECO:0000305" key="2"/>
<organism>
    <name type="scientific">Escherichia coli (strain K12)</name>
    <dbReference type="NCBI Taxonomy" id="83333"/>
    <lineage>
        <taxon>Bacteria</taxon>
        <taxon>Pseudomonadati</taxon>
        <taxon>Pseudomonadota</taxon>
        <taxon>Gammaproteobacteria</taxon>
        <taxon>Enterobacterales</taxon>
        <taxon>Enterobacteriaceae</taxon>
        <taxon>Escherichia</taxon>
    </lineage>
</organism>